<sequence>MLWSVLRHILWVALLLLVLSLLGFVILLRDPLNANLVTQNIYIGYFHYLGTLLQGDFGITYNGGKSLMNLILTVLPPTLELCFITLFLAFIFGLPLGIISAVNSEQVFAKSLQILSYVGLSIPIFWLAPILLYVAALSHWEIAAIGQYNLLYEIKSITGFPVIDMWFMEVPYRTKIVQNILQHLALPTLVLCILPTMEIIRIIHQRAEYILNQNFSKVATTRGWSKWKILHQYVFRNTFPLLVPQVPRVFTLVLTQCMLVETALGWPGIGRWLINAVNEQDYNSIAAGVIVIGVCIILIDTFTKIFTFILDPFKKKGWYAK</sequence>
<keyword id="KW-0997">Cell inner membrane</keyword>
<keyword id="KW-1003">Cell membrane</keyword>
<keyword id="KW-0472">Membrane</keyword>
<keyword id="KW-0571">Peptide transport</keyword>
<keyword id="KW-0653">Protein transport</keyword>
<keyword id="KW-1185">Reference proteome</keyword>
<keyword id="KW-0812">Transmembrane</keyword>
<keyword id="KW-1133">Transmembrane helix</keyword>
<keyword id="KW-0813">Transport</keyword>
<name>SAPB_HAEIN</name>
<proteinExistence type="inferred from homology"/>
<gene>
    <name type="primary">sapB</name>
    <name type="ordered locus">HI_1639</name>
</gene>
<comment type="function">
    <text evidence="1">Involved in a peptide intake transport system that plays a role in the resistance to antimicrobial peptides.</text>
</comment>
<comment type="subcellular location">
    <subcellularLocation>
        <location evidence="1">Cell inner membrane</location>
        <topology evidence="2">Multi-pass membrane protein</topology>
    </subcellularLocation>
</comment>
<comment type="similarity">
    <text evidence="3">Belongs to the binding-protein-dependent transport system permease family. OppBC subfamily.</text>
</comment>
<accession>P45286</accession>
<reference key="1">
    <citation type="journal article" date="1995" name="Science">
        <title>Whole-genome random sequencing and assembly of Haemophilus influenzae Rd.</title>
        <authorList>
            <person name="Fleischmann R.D."/>
            <person name="Adams M.D."/>
            <person name="White O."/>
            <person name="Clayton R.A."/>
            <person name="Kirkness E.F."/>
            <person name="Kerlavage A.R."/>
            <person name="Bult C.J."/>
            <person name="Tomb J.-F."/>
            <person name="Dougherty B.A."/>
            <person name="Merrick J.M."/>
            <person name="McKenney K."/>
            <person name="Sutton G.G."/>
            <person name="FitzHugh W."/>
            <person name="Fields C.A."/>
            <person name="Gocayne J.D."/>
            <person name="Scott J.D."/>
            <person name="Shirley R."/>
            <person name="Liu L.-I."/>
            <person name="Glodek A."/>
            <person name="Kelley J.M."/>
            <person name="Weidman J.F."/>
            <person name="Phillips C.A."/>
            <person name="Spriggs T."/>
            <person name="Hedblom E."/>
            <person name="Cotton M.D."/>
            <person name="Utterback T.R."/>
            <person name="Hanna M.C."/>
            <person name="Nguyen D.T."/>
            <person name="Saudek D.M."/>
            <person name="Brandon R.C."/>
            <person name="Fine L.D."/>
            <person name="Fritchman J.L."/>
            <person name="Fuhrmann J.L."/>
            <person name="Geoghagen N.S.M."/>
            <person name="Gnehm C.L."/>
            <person name="McDonald L.A."/>
            <person name="Small K.V."/>
            <person name="Fraser C.M."/>
            <person name="Smith H.O."/>
            <person name="Venter J.C."/>
        </authorList>
    </citation>
    <scope>NUCLEOTIDE SEQUENCE [LARGE SCALE GENOMIC DNA]</scope>
    <source>
        <strain>ATCC 51907 / DSM 11121 / KW20 / Rd</strain>
    </source>
</reference>
<protein>
    <recommendedName>
        <fullName>Peptide transport system permease protein SapB</fullName>
    </recommendedName>
</protein>
<feature type="chain" id="PRO_0000060162" description="Peptide transport system permease protein SapB">
    <location>
        <begin position="1"/>
        <end position="321"/>
    </location>
</feature>
<feature type="transmembrane region" description="Helical" evidence="2">
    <location>
        <begin position="8"/>
        <end position="28"/>
    </location>
</feature>
<feature type="transmembrane region" description="Helical" evidence="2">
    <location>
        <begin position="41"/>
        <end position="61"/>
    </location>
</feature>
<feature type="transmembrane region" description="Helical" evidence="2">
    <location>
        <begin position="82"/>
        <end position="102"/>
    </location>
</feature>
<feature type="transmembrane region" description="Helical" evidence="2">
    <location>
        <begin position="117"/>
        <end position="137"/>
    </location>
</feature>
<feature type="transmembrane region" description="Helical" evidence="2">
    <location>
        <begin position="150"/>
        <end position="170"/>
    </location>
</feature>
<feature type="transmembrane region" description="Helical" evidence="2">
    <location>
        <begin position="180"/>
        <end position="200"/>
    </location>
</feature>
<feature type="transmembrane region" description="Helical" evidence="2">
    <location>
        <begin position="249"/>
        <end position="269"/>
    </location>
</feature>
<feature type="transmembrane region" description="Helical" evidence="2">
    <location>
        <begin position="289"/>
        <end position="309"/>
    </location>
</feature>
<feature type="domain" description="ABC transmembrane type-1" evidence="2">
    <location>
        <begin position="75"/>
        <end position="303"/>
    </location>
</feature>
<evidence type="ECO:0000250" key="1"/>
<evidence type="ECO:0000255" key="2">
    <source>
        <dbReference type="PROSITE-ProRule" id="PRU00441"/>
    </source>
</evidence>
<evidence type="ECO:0000305" key="3"/>
<organism>
    <name type="scientific">Haemophilus influenzae (strain ATCC 51907 / DSM 11121 / KW20 / Rd)</name>
    <dbReference type="NCBI Taxonomy" id="71421"/>
    <lineage>
        <taxon>Bacteria</taxon>
        <taxon>Pseudomonadati</taxon>
        <taxon>Pseudomonadota</taxon>
        <taxon>Gammaproteobacteria</taxon>
        <taxon>Pasteurellales</taxon>
        <taxon>Pasteurellaceae</taxon>
        <taxon>Haemophilus</taxon>
    </lineage>
</organism>
<dbReference type="EMBL" id="L42023">
    <property type="protein sequence ID" value="AAC23286.1"/>
    <property type="molecule type" value="Genomic_DNA"/>
</dbReference>
<dbReference type="PIR" id="B64134">
    <property type="entry name" value="B64134"/>
</dbReference>
<dbReference type="RefSeq" id="NP_439781.1">
    <property type="nucleotide sequence ID" value="NC_000907.1"/>
</dbReference>
<dbReference type="SMR" id="P45286"/>
<dbReference type="STRING" id="71421.HI_1639"/>
<dbReference type="EnsemblBacteria" id="AAC23286">
    <property type="protein sequence ID" value="AAC23286"/>
    <property type="gene ID" value="HI_1639"/>
</dbReference>
<dbReference type="KEGG" id="hin:HI_1639"/>
<dbReference type="PATRIC" id="fig|71421.8.peg.1715"/>
<dbReference type="eggNOG" id="COG4168">
    <property type="taxonomic scope" value="Bacteria"/>
</dbReference>
<dbReference type="HOGENOM" id="CLU_036879_0_3_6"/>
<dbReference type="OrthoDB" id="9805855at2"/>
<dbReference type="PhylomeDB" id="P45286"/>
<dbReference type="BioCyc" id="HINF71421:G1GJ1-1656-MONOMER"/>
<dbReference type="Proteomes" id="UP000000579">
    <property type="component" value="Chromosome"/>
</dbReference>
<dbReference type="GO" id="GO:0005886">
    <property type="term" value="C:plasma membrane"/>
    <property type="evidence" value="ECO:0007669"/>
    <property type="project" value="UniProtKB-SubCell"/>
</dbReference>
<dbReference type="GO" id="GO:0071916">
    <property type="term" value="F:dipeptide transmembrane transporter activity"/>
    <property type="evidence" value="ECO:0000318"/>
    <property type="project" value="GO_Central"/>
</dbReference>
<dbReference type="GO" id="GO:0015031">
    <property type="term" value="P:protein transport"/>
    <property type="evidence" value="ECO:0007669"/>
    <property type="project" value="UniProtKB-KW"/>
</dbReference>
<dbReference type="CDD" id="cd06261">
    <property type="entry name" value="TM_PBP2"/>
    <property type="match status" value="1"/>
</dbReference>
<dbReference type="Gene3D" id="1.10.3720.10">
    <property type="entry name" value="MetI-like"/>
    <property type="match status" value="1"/>
</dbReference>
<dbReference type="InterPro" id="IPR000515">
    <property type="entry name" value="MetI-like"/>
</dbReference>
<dbReference type="InterPro" id="IPR035906">
    <property type="entry name" value="MetI-like_sf"/>
</dbReference>
<dbReference type="PANTHER" id="PTHR43163">
    <property type="entry name" value="DIPEPTIDE TRANSPORT SYSTEM PERMEASE PROTEIN DPPB-RELATED"/>
    <property type="match status" value="1"/>
</dbReference>
<dbReference type="PANTHER" id="PTHR43163:SF4">
    <property type="entry name" value="PUTRESCINE EXPORT SYSTEM PERMEASE PROTEIN SAPB"/>
    <property type="match status" value="1"/>
</dbReference>
<dbReference type="Pfam" id="PF00528">
    <property type="entry name" value="BPD_transp_1"/>
    <property type="match status" value="1"/>
</dbReference>
<dbReference type="SUPFAM" id="SSF161098">
    <property type="entry name" value="MetI-like"/>
    <property type="match status" value="1"/>
</dbReference>
<dbReference type="PROSITE" id="PS50928">
    <property type="entry name" value="ABC_TM1"/>
    <property type="match status" value="1"/>
</dbReference>